<gene>
    <name evidence="1" type="primary">RPS1B</name>
    <name type="ORF">CLUG_01478</name>
</gene>
<sequence length="256" mass="28809">MAVGKNKRLSKGKKGLKKKAVDPFARKEWFDIKAPSTFENRNVGKTLINKSTGLKNAADGLKGRVFEVCLADLQGSEDHSYRKVKLRVDEVQGKNLLTNFHGLDFTSDKLRSLVRKWQSLVEANVTVKTADDYVLRVFAIAFTKRQANQVKKTTYAQSSKLREVRKKMIEIMQREVSNVTLAQLTSKLIPEVIGREIEKSTQSILPLQNIHIRKVKLLKQPKFDLGSLLALHGEGSTEEKGKKVSSGYKDVVLESV</sequence>
<accession>C4XZU6</accession>
<feature type="initiator methionine" description="Removed" evidence="1">
    <location>
        <position position="1"/>
    </location>
</feature>
<feature type="chain" id="PRO_0000389369" description="Small ribosomal subunit protein eS1B">
    <location>
        <begin position="2"/>
        <end position="256"/>
    </location>
</feature>
<feature type="modified residue" description="N-acetylalanine; partial" evidence="1">
    <location>
        <position position="2"/>
    </location>
</feature>
<keyword id="KW-0007">Acetylation</keyword>
<keyword id="KW-0963">Cytoplasm</keyword>
<keyword id="KW-1185">Reference proteome</keyword>
<keyword id="KW-0687">Ribonucleoprotein</keyword>
<keyword id="KW-0689">Ribosomal protein</keyword>
<dbReference type="EMBL" id="CH408077">
    <property type="protein sequence ID" value="EEQ37355.1"/>
    <property type="molecule type" value="Genomic_DNA"/>
</dbReference>
<dbReference type="SMR" id="C4XZU6"/>
<dbReference type="FunCoup" id="C4XZU6">
    <property type="interactions" value="1305"/>
</dbReference>
<dbReference type="STRING" id="306902.C4XZU6"/>
<dbReference type="GeneID" id="8498840"/>
<dbReference type="KEGG" id="clu:CLUG_01478"/>
<dbReference type="VEuPathDB" id="FungiDB:CLUG_01478"/>
<dbReference type="HOGENOM" id="CLU_062507_0_0_1"/>
<dbReference type="InParanoid" id="C4XZU6"/>
<dbReference type="OMA" id="MCEIITR"/>
<dbReference type="OrthoDB" id="111503at4891"/>
<dbReference type="Proteomes" id="UP000007703">
    <property type="component" value="Unassembled WGS sequence"/>
</dbReference>
<dbReference type="GO" id="GO:0022627">
    <property type="term" value="C:cytosolic small ribosomal subunit"/>
    <property type="evidence" value="ECO:0007669"/>
    <property type="project" value="UniProtKB-UniRule"/>
</dbReference>
<dbReference type="GO" id="GO:0003735">
    <property type="term" value="F:structural constituent of ribosome"/>
    <property type="evidence" value="ECO:0007669"/>
    <property type="project" value="UniProtKB-UniRule"/>
</dbReference>
<dbReference type="GO" id="GO:0006412">
    <property type="term" value="P:translation"/>
    <property type="evidence" value="ECO:0007669"/>
    <property type="project" value="UniProtKB-UniRule"/>
</dbReference>
<dbReference type="HAMAP" id="MF_03122">
    <property type="entry name" value="Ribosomal_eS1_euk"/>
    <property type="match status" value="1"/>
</dbReference>
<dbReference type="InterPro" id="IPR001593">
    <property type="entry name" value="Ribosomal_eS1"/>
</dbReference>
<dbReference type="InterPro" id="IPR018281">
    <property type="entry name" value="Ribosomal_eS1_CS"/>
</dbReference>
<dbReference type="InterPro" id="IPR027500">
    <property type="entry name" value="Ribosomal_eS1_euk"/>
</dbReference>
<dbReference type="PANTHER" id="PTHR11830">
    <property type="entry name" value="40S RIBOSOMAL PROTEIN S3A"/>
    <property type="match status" value="1"/>
</dbReference>
<dbReference type="Pfam" id="PF01015">
    <property type="entry name" value="Ribosomal_S3Ae"/>
    <property type="match status" value="1"/>
</dbReference>
<dbReference type="SMART" id="SM01397">
    <property type="entry name" value="Ribosomal_S3Ae"/>
    <property type="match status" value="1"/>
</dbReference>
<dbReference type="PROSITE" id="PS01191">
    <property type="entry name" value="RIBOSOMAL_S3AE"/>
    <property type="match status" value="1"/>
</dbReference>
<organism>
    <name type="scientific">Clavispora lusitaniae (strain ATCC 42720)</name>
    <name type="common">Yeast</name>
    <name type="synonym">Candida lusitaniae</name>
    <dbReference type="NCBI Taxonomy" id="306902"/>
    <lineage>
        <taxon>Eukaryota</taxon>
        <taxon>Fungi</taxon>
        <taxon>Dikarya</taxon>
        <taxon>Ascomycota</taxon>
        <taxon>Saccharomycotina</taxon>
        <taxon>Pichiomycetes</taxon>
        <taxon>Metschnikowiaceae</taxon>
        <taxon>Clavispora</taxon>
    </lineage>
</organism>
<evidence type="ECO:0000255" key="1">
    <source>
        <dbReference type="HAMAP-Rule" id="MF_03122"/>
    </source>
</evidence>
<evidence type="ECO:0000305" key="2"/>
<proteinExistence type="inferred from homology"/>
<name>RS3A2_CLAL4</name>
<comment type="subunit">
    <text evidence="1">Component of the small ribosomal subunit. Mature ribosomes consist of a small (40S) and a large (60S) subunit. The 40S subunit contains about 33 different proteins and 1 molecule of RNA (18S). The 60S subunit contains about 49 different proteins and 3 molecules of RNA (25S, 5.8S and 5S).</text>
</comment>
<comment type="subcellular location">
    <subcellularLocation>
        <location evidence="1">Cytoplasm</location>
    </subcellularLocation>
</comment>
<comment type="similarity">
    <text evidence="1">Belongs to the eukaryotic ribosomal protein eS1 family.</text>
</comment>
<reference key="1">
    <citation type="journal article" date="2009" name="Nature">
        <title>Evolution of pathogenicity and sexual reproduction in eight Candida genomes.</title>
        <authorList>
            <person name="Butler G."/>
            <person name="Rasmussen M.D."/>
            <person name="Lin M.F."/>
            <person name="Santos M.A.S."/>
            <person name="Sakthikumar S."/>
            <person name="Munro C.A."/>
            <person name="Rheinbay E."/>
            <person name="Grabherr M."/>
            <person name="Forche A."/>
            <person name="Reedy J.L."/>
            <person name="Agrafioti I."/>
            <person name="Arnaud M.B."/>
            <person name="Bates S."/>
            <person name="Brown A.J.P."/>
            <person name="Brunke S."/>
            <person name="Costanzo M.C."/>
            <person name="Fitzpatrick D.A."/>
            <person name="de Groot P.W.J."/>
            <person name="Harris D."/>
            <person name="Hoyer L.L."/>
            <person name="Hube B."/>
            <person name="Klis F.M."/>
            <person name="Kodira C."/>
            <person name="Lennard N."/>
            <person name="Logue M.E."/>
            <person name="Martin R."/>
            <person name="Neiman A.M."/>
            <person name="Nikolaou E."/>
            <person name="Quail M.A."/>
            <person name="Quinn J."/>
            <person name="Santos M.C."/>
            <person name="Schmitzberger F.F."/>
            <person name="Sherlock G."/>
            <person name="Shah P."/>
            <person name="Silverstein K.A.T."/>
            <person name="Skrzypek M.S."/>
            <person name="Soll D."/>
            <person name="Staggs R."/>
            <person name="Stansfield I."/>
            <person name="Stumpf M.P.H."/>
            <person name="Sudbery P.E."/>
            <person name="Srikantha T."/>
            <person name="Zeng Q."/>
            <person name="Berman J."/>
            <person name="Berriman M."/>
            <person name="Heitman J."/>
            <person name="Gow N.A.R."/>
            <person name="Lorenz M.C."/>
            <person name="Birren B.W."/>
            <person name="Kellis M."/>
            <person name="Cuomo C.A."/>
        </authorList>
    </citation>
    <scope>NUCLEOTIDE SEQUENCE [LARGE SCALE GENOMIC DNA]</scope>
    <source>
        <strain>ATCC 42720</strain>
    </source>
</reference>
<protein>
    <recommendedName>
        <fullName evidence="1">Small ribosomal subunit protein eS1B</fullName>
    </recommendedName>
    <alternativeName>
        <fullName evidence="2">40S ribosomal protein S1-B</fullName>
    </alternativeName>
</protein>